<name>HBB_CICCI</name>
<protein>
    <recommendedName>
        <fullName>Hemoglobin subunit beta</fullName>
    </recommendedName>
    <alternativeName>
        <fullName>Beta-globin</fullName>
    </alternativeName>
    <alternativeName>
        <fullName>Hemoglobin beta chain</fullName>
    </alternativeName>
</protein>
<reference key="1">
    <citation type="journal article" date="1984" name="Hoppe-Seyler's Z. Physiol. Chem.">
        <title>Hemoglobin of the adult white stork (Ciconia ciconia, ciconiiformes). The primary structure of alpha A- and beta-chains from the only present hemoglobin component.</title>
        <authorList>
            <person name="Godovac-Zimmermann J."/>
            <person name="Braunitzer G."/>
        </authorList>
    </citation>
    <scope>PROTEIN SEQUENCE</scope>
</reference>
<evidence type="ECO:0000255" key="1">
    <source>
        <dbReference type="PROSITE-ProRule" id="PRU00238"/>
    </source>
</evidence>
<feature type="chain" id="PRO_0000052929" description="Hemoglobin subunit beta">
    <location>
        <begin position="1"/>
        <end position="146"/>
    </location>
</feature>
<feature type="domain" description="Globin" evidence="1">
    <location>
        <begin position="2"/>
        <end position="146"/>
    </location>
</feature>
<feature type="binding site" description="distal binding residue">
    <location>
        <position position="63"/>
    </location>
    <ligand>
        <name>heme b</name>
        <dbReference type="ChEBI" id="CHEBI:60344"/>
    </ligand>
    <ligandPart>
        <name>Fe</name>
        <dbReference type="ChEBI" id="CHEBI:18248"/>
    </ligandPart>
</feature>
<feature type="binding site" description="proximal binding residue">
    <location>
        <position position="92"/>
    </location>
    <ligand>
        <name>heme b</name>
        <dbReference type="ChEBI" id="CHEBI:60344"/>
    </ligand>
    <ligandPart>
        <name>Fe</name>
        <dbReference type="ChEBI" id="CHEBI:18248"/>
    </ligandPart>
</feature>
<keyword id="KW-0903">Direct protein sequencing</keyword>
<keyword id="KW-0349">Heme</keyword>
<keyword id="KW-0408">Iron</keyword>
<keyword id="KW-0479">Metal-binding</keyword>
<keyword id="KW-0561">Oxygen transport</keyword>
<keyword id="KW-0813">Transport</keyword>
<dbReference type="PIR" id="A02445">
    <property type="entry name" value="HBKOW"/>
</dbReference>
<dbReference type="SMR" id="P02125"/>
<dbReference type="GO" id="GO:0072562">
    <property type="term" value="C:blood microparticle"/>
    <property type="evidence" value="ECO:0007669"/>
    <property type="project" value="TreeGrafter"/>
</dbReference>
<dbReference type="GO" id="GO:0031838">
    <property type="term" value="C:haptoglobin-hemoglobin complex"/>
    <property type="evidence" value="ECO:0007669"/>
    <property type="project" value="TreeGrafter"/>
</dbReference>
<dbReference type="GO" id="GO:0005833">
    <property type="term" value="C:hemoglobin complex"/>
    <property type="evidence" value="ECO:0007669"/>
    <property type="project" value="InterPro"/>
</dbReference>
<dbReference type="GO" id="GO:0031720">
    <property type="term" value="F:haptoglobin binding"/>
    <property type="evidence" value="ECO:0007669"/>
    <property type="project" value="TreeGrafter"/>
</dbReference>
<dbReference type="GO" id="GO:0020037">
    <property type="term" value="F:heme binding"/>
    <property type="evidence" value="ECO:0007669"/>
    <property type="project" value="InterPro"/>
</dbReference>
<dbReference type="GO" id="GO:0046872">
    <property type="term" value="F:metal ion binding"/>
    <property type="evidence" value="ECO:0007669"/>
    <property type="project" value="UniProtKB-KW"/>
</dbReference>
<dbReference type="GO" id="GO:0043177">
    <property type="term" value="F:organic acid binding"/>
    <property type="evidence" value="ECO:0007669"/>
    <property type="project" value="TreeGrafter"/>
</dbReference>
<dbReference type="GO" id="GO:0019825">
    <property type="term" value="F:oxygen binding"/>
    <property type="evidence" value="ECO:0007669"/>
    <property type="project" value="InterPro"/>
</dbReference>
<dbReference type="GO" id="GO:0005344">
    <property type="term" value="F:oxygen carrier activity"/>
    <property type="evidence" value="ECO:0007669"/>
    <property type="project" value="UniProtKB-KW"/>
</dbReference>
<dbReference type="GO" id="GO:0004601">
    <property type="term" value="F:peroxidase activity"/>
    <property type="evidence" value="ECO:0007669"/>
    <property type="project" value="TreeGrafter"/>
</dbReference>
<dbReference type="GO" id="GO:0042744">
    <property type="term" value="P:hydrogen peroxide catabolic process"/>
    <property type="evidence" value="ECO:0007669"/>
    <property type="project" value="TreeGrafter"/>
</dbReference>
<dbReference type="CDD" id="cd08925">
    <property type="entry name" value="Hb-beta-like"/>
    <property type="match status" value="1"/>
</dbReference>
<dbReference type="FunFam" id="1.10.490.10:FF:000001">
    <property type="entry name" value="Hemoglobin subunit beta"/>
    <property type="match status" value="1"/>
</dbReference>
<dbReference type="Gene3D" id="1.10.490.10">
    <property type="entry name" value="Globins"/>
    <property type="match status" value="1"/>
</dbReference>
<dbReference type="InterPro" id="IPR000971">
    <property type="entry name" value="Globin"/>
</dbReference>
<dbReference type="InterPro" id="IPR009050">
    <property type="entry name" value="Globin-like_sf"/>
</dbReference>
<dbReference type="InterPro" id="IPR012292">
    <property type="entry name" value="Globin/Proto"/>
</dbReference>
<dbReference type="InterPro" id="IPR002337">
    <property type="entry name" value="Hemoglobin_b"/>
</dbReference>
<dbReference type="InterPro" id="IPR050056">
    <property type="entry name" value="Hemoglobin_oxygen_transport"/>
</dbReference>
<dbReference type="PANTHER" id="PTHR11442">
    <property type="entry name" value="HEMOGLOBIN FAMILY MEMBER"/>
    <property type="match status" value="1"/>
</dbReference>
<dbReference type="PANTHER" id="PTHR11442:SF7">
    <property type="entry name" value="HEMOGLOBIN SUBUNIT EPSILON"/>
    <property type="match status" value="1"/>
</dbReference>
<dbReference type="Pfam" id="PF00042">
    <property type="entry name" value="Globin"/>
    <property type="match status" value="1"/>
</dbReference>
<dbReference type="PRINTS" id="PR00814">
    <property type="entry name" value="BETAHAEM"/>
</dbReference>
<dbReference type="SUPFAM" id="SSF46458">
    <property type="entry name" value="Globin-like"/>
    <property type="match status" value="1"/>
</dbReference>
<dbReference type="PROSITE" id="PS01033">
    <property type="entry name" value="GLOBIN"/>
    <property type="match status" value="1"/>
</dbReference>
<accession>P02125</accession>
<comment type="function">
    <text>Involved in oxygen transport from the lung to the various peripheral tissues.</text>
</comment>
<comment type="subunit">
    <text>Heterotetramer of two alpha chains and two beta chains.</text>
</comment>
<comment type="tissue specificity">
    <text>Red blood cells.</text>
</comment>
<comment type="similarity">
    <text evidence="1">Belongs to the globin family.</text>
</comment>
<gene>
    <name type="primary">HBB</name>
</gene>
<sequence length="146" mass="16206">VHWTAEEKQLITGLWGKVNVDECGAEALARLLIVYPWTQRFFASFGNLATASAITGNAMVHAHGKKVLTSFGEAVKNLDNIKNTFAQLSELHCDKLHVDPENFKLLGDILIIVLAAHFGKDFTPDCQAAWKKLVRVVAHALARKYH</sequence>
<organism>
    <name type="scientific">Ciconia ciconia</name>
    <name type="common">White stork</name>
    <dbReference type="NCBI Taxonomy" id="8928"/>
    <lineage>
        <taxon>Eukaryota</taxon>
        <taxon>Metazoa</taxon>
        <taxon>Chordata</taxon>
        <taxon>Craniata</taxon>
        <taxon>Vertebrata</taxon>
        <taxon>Euteleostomi</taxon>
        <taxon>Archelosauria</taxon>
        <taxon>Archosauria</taxon>
        <taxon>Dinosauria</taxon>
        <taxon>Saurischia</taxon>
        <taxon>Theropoda</taxon>
        <taxon>Coelurosauria</taxon>
        <taxon>Aves</taxon>
        <taxon>Neognathae</taxon>
        <taxon>Neoaves</taxon>
        <taxon>Aequornithes</taxon>
        <taxon>Ciconiiformes</taxon>
        <taxon>Ciconiidae</taxon>
        <taxon>Ciconia</taxon>
    </lineage>
</organism>
<proteinExistence type="evidence at protein level"/>